<proteinExistence type="inferred from homology"/>
<accession>Q1IF40</accession>
<evidence type="ECO:0000255" key="1">
    <source>
        <dbReference type="HAMAP-Rule" id="MF_01343"/>
    </source>
</evidence>
<evidence type="ECO:0000305" key="2"/>
<organism>
    <name type="scientific">Pseudomonas entomophila (strain L48)</name>
    <dbReference type="NCBI Taxonomy" id="384676"/>
    <lineage>
        <taxon>Bacteria</taxon>
        <taxon>Pseudomonadati</taxon>
        <taxon>Pseudomonadota</taxon>
        <taxon>Gammaproteobacteria</taxon>
        <taxon>Pseudomonadales</taxon>
        <taxon>Pseudomonadaceae</taxon>
        <taxon>Pseudomonas</taxon>
    </lineage>
</organism>
<comment type="function">
    <text evidence="1">One of the primary rRNA binding proteins, it binds directly to 16S rRNA where it helps nucleate assembly of the platform of the 30S subunit by binding and bridging several RNA helices of the 16S rRNA.</text>
</comment>
<comment type="function">
    <text evidence="1">Forms an intersubunit bridge (bridge B4) with the 23S rRNA of the 50S subunit in the ribosome.</text>
</comment>
<comment type="subunit">
    <text evidence="1">Part of the 30S ribosomal subunit. Forms a bridge to the 50S subunit in the 70S ribosome, contacting the 23S rRNA.</text>
</comment>
<comment type="similarity">
    <text evidence="1">Belongs to the universal ribosomal protein uS15 family.</text>
</comment>
<name>RS15_PSEE4</name>
<keyword id="KW-0687">Ribonucleoprotein</keyword>
<keyword id="KW-0689">Ribosomal protein</keyword>
<keyword id="KW-0694">RNA-binding</keyword>
<keyword id="KW-0699">rRNA-binding</keyword>
<feature type="chain" id="PRO_1000054846" description="Small ribosomal subunit protein uS15">
    <location>
        <begin position="1"/>
        <end position="89"/>
    </location>
</feature>
<sequence length="89" mass="10045">MALSVEEKAQIVAEYQQAAGDTGSPEVQVALLTANINKLQGHFKANEKDHHSRRGLIRMVNQRRKLLDYLKGKDTTRYSALIGRLGLRR</sequence>
<reference key="1">
    <citation type="journal article" date="2006" name="Nat. Biotechnol.">
        <title>Complete genome sequence of the entomopathogenic and metabolically versatile soil bacterium Pseudomonas entomophila.</title>
        <authorList>
            <person name="Vodovar N."/>
            <person name="Vallenet D."/>
            <person name="Cruveiller S."/>
            <person name="Rouy Z."/>
            <person name="Barbe V."/>
            <person name="Acosta C."/>
            <person name="Cattolico L."/>
            <person name="Jubin C."/>
            <person name="Lajus A."/>
            <person name="Segurens B."/>
            <person name="Vacherie B."/>
            <person name="Wincker P."/>
            <person name="Weissenbach J."/>
            <person name="Lemaitre B."/>
            <person name="Medigue C."/>
            <person name="Boccard F."/>
        </authorList>
    </citation>
    <scope>NUCLEOTIDE SEQUENCE [LARGE SCALE GENOMIC DNA]</scope>
    <source>
        <strain>L48</strain>
    </source>
</reference>
<gene>
    <name evidence="1" type="primary">rpsO</name>
    <name type="ordered locus">PSEEN0798</name>
</gene>
<protein>
    <recommendedName>
        <fullName evidence="1">Small ribosomal subunit protein uS15</fullName>
    </recommendedName>
    <alternativeName>
        <fullName evidence="2">30S ribosomal protein S15</fullName>
    </alternativeName>
</protein>
<dbReference type="EMBL" id="CT573326">
    <property type="protein sequence ID" value="CAK13714.1"/>
    <property type="molecule type" value="Genomic_DNA"/>
</dbReference>
<dbReference type="RefSeq" id="WP_011532144.1">
    <property type="nucleotide sequence ID" value="NC_008027.1"/>
</dbReference>
<dbReference type="SMR" id="Q1IF40"/>
<dbReference type="STRING" id="384676.PSEEN0798"/>
<dbReference type="GeneID" id="93546002"/>
<dbReference type="KEGG" id="pen:PSEEN0798"/>
<dbReference type="eggNOG" id="COG0184">
    <property type="taxonomic scope" value="Bacteria"/>
</dbReference>
<dbReference type="HOGENOM" id="CLU_148518_0_0_6"/>
<dbReference type="OrthoDB" id="9799262at2"/>
<dbReference type="Proteomes" id="UP000000658">
    <property type="component" value="Chromosome"/>
</dbReference>
<dbReference type="GO" id="GO:0022627">
    <property type="term" value="C:cytosolic small ribosomal subunit"/>
    <property type="evidence" value="ECO:0007669"/>
    <property type="project" value="TreeGrafter"/>
</dbReference>
<dbReference type="GO" id="GO:0019843">
    <property type="term" value="F:rRNA binding"/>
    <property type="evidence" value="ECO:0007669"/>
    <property type="project" value="UniProtKB-UniRule"/>
</dbReference>
<dbReference type="GO" id="GO:0003735">
    <property type="term" value="F:structural constituent of ribosome"/>
    <property type="evidence" value="ECO:0007669"/>
    <property type="project" value="InterPro"/>
</dbReference>
<dbReference type="GO" id="GO:0006412">
    <property type="term" value="P:translation"/>
    <property type="evidence" value="ECO:0007669"/>
    <property type="project" value="UniProtKB-UniRule"/>
</dbReference>
<dbReference type="CDD" id="cd00353">
    <property type="entry name" value="Ribosomal_S15p_S13e"/>
    <property type="match status" value="1"/>
</dbReference>
<dbReference type="FunFam" id="1.10.287.10:FF:000002">
    <property type="entry name" value="30S ribosomal protein S15"/>
    <property type="match status" value="1"/>
</dbReference>
<dbReference type="Gene3D" id="6.10.250.3130">
    <property type="match status" value="1"/>
</dbReference>
<dbReference type="Gene3D" id="1.10.287.10">
    <property type="entry name" value="S15/NS1, RNA-binding"/>
    <property type="match status" value="1"/>
</dbReference>
<dbReference type="HAMAP" id="MF_01343_B">
    <property type="entry name" value="Ribosomal_uS15_B"/>
    <property type="match status" value="1"/>
</dbReference>
<dbReference type="InterPro" id="IPR000589">
    <property type="entry name" value="Ribosomal_uS15"/>
</dbReference>
<dbReference type="InterPro" id="IPR005290">
    <property type="entry name" value="Ribosomal_uS15_bac-type"/>
</dbReference>
<dbReference type="InterPro" id="IPR009068">
    <property type="entry name" value="uS15_NS1_RNA-bd_sf"/>
</dbReference>
<dbReference type="NCBIfam" id="TIGR00952">
    <property type="entry name" value="S15_bact"/>
    <property type="match status" value="1"/>
</dbReference>
<dbReference type="PANTHER" id="PTHR23321">
    <property type="entry name" value="RIBOSOMAL PROTEIN S15, BACTERIAL AND ORGANELLAR"/>
    <property type="match status" value="1"/>
</dbReference>
<dbReference type="PANTHER" id="PTHR23321:SF26">
    <property type="entry name" value="SMALL RIBOSOMAL SUBUNIT PROTEIN US15M"/>
    <property type="match status" value="1"/>
</dbReference>
<dbReference type="Pfam" id="PF00312">
    <property type="entry name" value="Ribosomal_S15"/>
    <property type="match status" value="1"/>
</dbReference>
<dbReference type="SMART" id="SM01387">
    <property type="entry name" value="Ribosomal_S15"/>
    <property type="match status" value="1"/>
</dbReference>
<dbReference type="SUPFAM" id="SSF47060">
    <property type="entry name" value="S15/NS1 RNA-binding domain"/>
    <property type="match status" value="1"/>
</dbReference>
<dbReference type="PROSITE" id="PS00362">
    <property type="entry name" value="RIBOSOMAL_S15"/>
    <property type="match status" value="1"/>
</dbReference>